<comment type="function">
    <text evidence="1">Component of the acetyl coenzyme A carboxylase (ACC) complex. First, biotin carboxylase catalyzes the carboxylation of biotin on its carrier protein (BCCP) and then the CO(2) group is transferred by the carboxyltransferase to acetyl-CoA to form malonyl-CoA.</text>
</comment>
<comment type="catalytic activity">
    <reaction evidence="1">
        <text>N(6)-carboxybiotinyl-L-lysyl-[protein] + acetyl-CoA = N(6)-biotinyl-L-lysyl-[protein] + malonyl-CoA</text>
        <dbReference type="Rhea" id="RHEA:54728"/>
        <dbReference type="Rhea" id="RHEA-COMP:10505"/>
        <dbReference type="Rhea" id="RHEA-COMP:10506"/>
        <dbReference type="ChEBI" id="CHEBI:57288"/>
        <dbReference type="ChEBI" id="CHEBI:57384"/>
        <dbReference type="ChEBI" id="CHEBI:83144"/>
        <dbReference type="ChEBI" id="CHEBI:83145"/>
        <dbReference type="EC" id="2.1.3.15"/>
    </reaction>
</comment>
<comment type="pathway">
    <text evidence="1">Lipid metabolism; malonyl-CoA biosynthesis; malonyl-CoA from acetyl-CoA: step 1/1.</text>
</comment>
<comment type="subunit">
    <text evidence="1">Acetyl-CoA carboxylase is a heterohexamer composed of biotin carboxyl carrier protein (AccB), biotin carboxylase (AccC) and two subunits each of ACCase subunit alpha (AccA) and ACCase subunit beta (AccD).</text>
</comment>
<comment type="subcellular location">
    <subcellularLocation>
        <location evidence="1">Cytoplasm</location>
    </subcellularLocation>
</comment>
<comment type="similarity">
    <text evidence="1">Belongs to the AccA family.</text>
</comment>
<gene>
    <name evidence="1" type="primary">accA</name>
    <name type="ordered locus">RBAM_026250</name>
</gene>
<proteinExistence type="inferred from homology"/>
<feature type="chain" id="PRO_1000062577" description="Acetyl-coenzyme A carboxylase carboxyl transferase subunit alpha">
    <location>
        <begin position="1"/>
        <end position="325"/>
    </location>
</feature>
<feature type="domain" description="CoA carboxyltransferase C-terminal" evidence="2">
    <location>
        <begin position="38"/>
        <end position="292"/>
    </location>
</feature>
<keyword id="KW-0067">ATP-binding</keyword>
<keyword id="KW-0963">Cytoplasm</keyword>
<keyword id="KW-0275">Fatty acid biosynthesis</keyword>
<keyword id="KW-0276">Fatty acid metabolism</keyword>
<keyword id="KW-0444">Lipid biosynthesis</keyword>
<keyword id="KW-0443">Lipid metabolism</keyword>
<keyword id="KW-0547">Nucleotide-binding</keyword>
<keyword id="KW-0808">Transferase</keyword>
<evidence type="ECO:0000255" key="1">
    <source>
        <dbReference type="HAMAP-Rule" id="MF_00823"/>
    </source>
</evidence>
<evidence type="ECO:0000255" key="2">
    <source>
        <dbReference type="PROSITE-ProRule" id="PRU01137"/>
    </source>
</evidence>
<sequence length="325" mass="36110">MAARLEFEKPVIELQTKIAELKKFTQDSEMDLSAEIARLEERLSKLQDEIYKNLKPWDRVQIARLPDRPTTLDYIQYLFTDFFECHGDRTYGDDAAIVGGVAKYHGMPVTVIGHQRGKDTKENLVRNFGMPHPEGYRKALRLMKQADKFNRPIICFIDTKGAYPGKAAEERGQSEAIAKNLFEMAGLTVPVVCIVIGEGGSGGALALGVGNRMLMLENSTYSVISPEGAASILWKDSSLAKKAAESMKITAPDLLELGIIDDMIKEVKGGAHHDIKQQAGYIDGILKETLKSLLQLNAEELISQRYEKYKAIGKVSVEDQYIGVN</sequence>
<protein>
    <recommendedName>
        <fullName evidence="1">Acetyl-coenzyme A carboxylase carboxyl transferase subunit alpha</fullName>
        <shortName evidence="1">ACCase subunit alpha</shortName>
        <shortName evidence="1">Acetyl-CoA carboxylase carboxyltransferase subunit alpha</shortName>
        <ecNumber evidence="1">2.1.3.15</ecNumber>
    </recommendedName>
</protein>
<name>ACCA_BACVZ</name>
<accession>A7Z7K7</accession>
<reference key="1">
    <citation type="journal article" date="2007" name="Nat. Biotechnol.">
        <title>Comparative analysis of the complete genome sequence of the plant growth-promoting bacterium Bacillus amyloliquefaciens FZB42.</title>
        <authorList>
            <person name="Chen X.H."/>
            <person name="Koumoutsi A."/>
            <person name="Scholz R."/>
            <person name="Eisenreich A."/>
            <person name="Schneider K."/>
            <person name="Heinemeyer I."/>
            <person name="Morgenstern B."/>
            <person name="Voss B."/>
            <person name="Hess W.R."/>
            <person name="Reva O."/>
            <person name="Junge H."/>
            <person name="Voigt B."/>
            <person name="Jungblut P.R."/>
            <person name="Vater J."/>
            <person name="Suessmuth R."/>
            <person name="Liesegang H."/>
            <person name="Strittmatter A."/>
            <person name="Gottschalk G."/>
            <person name="Borriss R."/>
        </authorList>
    </citation>
    <scope>NUCLEOTIDE SEQUENCE [LARGE SCALE GENOMIC DNA]</scope>
    <source>
        <strain>DSM 23117 / BGSC 10A6 / LMG 26770 / FZB42</strain>
    </source>
</reference>
<dbReference type="EC" id="2.1.3.15" evidence="1"/>
<dbReference type="EMBL" id="CP000560">
    <property type="protein sequence ID" value="ABS74983.1"/>
    <property type="molecule type" value="Genomic_DNA"/>
</dbReference>
<dbReference type="RefSeq" id="WP_012118170.1">
    <property type="nucleotide sequence ID" value="NC_009725.2"/>
</dbReference>
<dbReference type="SMR" id="A7Z7K7"/>
<dbReference type="GeneID" id="93081767"/>
<dbReference type="KEGG" id="bay:RBAM_026250"/>
<dbReference type="HOGENOM" id="CLU_015486_0_2_9"/>
<dbReference type="UniPathway" id="UPA00655">
    <property type="reaction ID" value="UER00711"/>
</dbReference>
<dbReference type="Proteomes" id="UP000001120">
    <property type="component" value="Chromosome"/>
</dbReference>
<dbReference type="GO" id="GO:0009317">
    <property type="term" value="C:acetyl-CoA carboxylase complex"/>
    <property type="evidence" value="ECO:0007669"/>
    <property type="project" value="InterPro"/>
</dbReference>
<dbReference type="GO" id="GO:0003989">
    <property type="term" value="F:acetyl-CoA carboxylase activity"/>
    <property type="evidence" value="ECO:0007669"/>
    <property type="project" value="InterPro"/>
</dbReference>
<dbReference type="GO" id="GO:0005524">
    <property type="term" value="F:ATP binding"/>
    <property type="evidence" value="ECO:0007669"/>
    <property type="project" value="UniProtKB-KW"/>
</dbReference>
<dbReference type="GO" id="GO:0016743">
    <property type="term" value="F:carboxyl- or carbamoyltransferase activity"/>
    <property type="evidence" value="ECO:0007669"/>
    <property type="project" value="UniProtKB-UniRule"/>
</dbReference>
<dbReference type="GO" id="GO:0006633">
    <property type="term" value="P:fatty acid biosynthetic process"/>
    <property type="evidence" value="ECO:0007669"/>
    <property type="project" value="UniProtKB-KW"/>
</dbReference>
<dbReference type="GO" id="GO:2001295">
    <property type="term" value="P:malonyl-CoA biosynthetic process"/>
    <property type="evidence" value="ECO:0007669"/>
    <property type="project" value="UniProtKB-UniRule"/>
</dbReference>
<dbReference type="Gene3D" id="3.90.226.10">
    <property type="entry name" value="2-enoyl-CoA Hydratase, Chain A, domain 1"/>
    <property type="match status" value="1"/>
</dbReference>
<dbReference type="HAMAP" id="MF_00823">
    <property type="entry name" value="AcetylCoA_CT_alpha"/>
    <property type="match status" value="1"/>
</dbReference>
<dbReference type="InterPro" id="IPR001095">
    <property type="entry name" value="Acetyl_CoA_COase_a_su"/>
</dbReference>
<dbReference type="InterPro" id="IPR029045">
    <property type="entry name" value="ClpP/crotonase-like_dom_sf"/>
</dbReference>
<dbReference type="InterPro" id="IPR011763">
    <property type="entry name" value="COA_CT_C"/>
</dbReference>
<dbReference type="NCBIfam" id="TIGR00513">
    <property type="entry name" value="accA"/>
    <property type="match status" value="1"/>
</dbReference>
<dbReference type="NCBIfam" id="NF041504">
    <property type="entry name" value="AccA_sub"/>
    <property type="match status" value="1"/>
</dbReference>
<dbReference type="NCBIfam" id="NF004344">
    <property type="entry name" value="PRK05724.1"/>
    <property type="match status" value="1"/>
</dbReference>
<dbReference type="PANTHER" id="PTHR42853">
    <property type="entry name" value="ACETYL-COENZYME A CARBOXYLASE CARBOXYL TRANSFERASE SUBUNIT ALPHA"/>
    <property type="match status" value="1"/>
</dbReference>
<dbReference type="PANTHER" id="PTHR42853:SF3">
    <property type="entry name" value="ACETYL-COENZYME A CARBOXYLASE CARBOXYL TRANSFERASE SUBUNIT ALPHA, CHLOROPLASTIC"/>
    <property type="match status" value="1"/>
</dbReference>
<dbReference type="Pfam" id="PF03255">
    <property type="entry name" value="ACCA"/>
    <property type="match status" value="1"/>
</dbReference>
<dbReference type="PRINTS" id="PR01069">
    <property type="entry name" value="ACCCTRFRASEA"/>
</dbReference>
<dbReference type="SUPFAM" id="SSF52096">
    <property type="entry name" value="ClpP/crotonase"/>
    <property type="match status" value="1"/>
</dbReference>
<dbReference type="PROSITE" id="PS50989">
    <property type="entry name" value="COA_CT_CTER"/>
    <property type="match status" value="1"/>
</dbReference>
<organism>
    <name type="scientific">Bacillus velezensis (strain DSM 23117 / BGSC 10A6 / LMG 26770 / FZB42)</name>
    <name type="common">Bacillus amyloliquefaciens subsp. plantarum</name>
    <dbReference type="NCBI Taxonomy" id="326423"/>
    <lineage>
        <taxon>Bacteria</taxon>
        <taxon>Bacillati</taxon>
        <taxon>Bacillota</taxon>
        <taxon>Bacilli</taxon>
        <taxon>Bacillales</taxon>
        <taxon>Bacillaceae</taxon>
        <taxon>Bacillus</taxon>
        <taxon>Bacillus amyloliquefaciens group</taxon>
    </lineage>
</organism>